<gene>
    <name type="primary">Hras</name>
    <name type="synonym">Hras1</name>
</gene>
<proteinExistence type="evidence at protein level"/>
<name>RASH_RAT</name>
<accession>P20171</accession>
<accession>Q4KLL6</accession>
<accession>Q5RJJ8</accession>
<protein>
    <recommendedName>
        <fullName>GTPase HRas</fullName>
        <ecNumber evidence="2">3.6.5.2</ecNumber>
    </recommendedName>
    <alternativeName>
        <fullName>H-Ras-1</fullName>
    </alternativeName>
    <alternativeName>
        <fullName>Transforming protein p21</fullName>
    </alternativeName>
    <alternativeName>
        <fullName>c-H-ras</fullName>
    </alternativeName>
    <alternativeName>
        <fullName>p21ras</fullName>
    </alternativeName>
    <component>
        <recommendedName>
            <fullName>GTPase HRas, N-terminally processed</fullName>
        </recommendedName>
    </component>
</protein>
<organism>
    <name type="scientific">Rattus norvegicus</name>
    <name type="common">Rat</name>
    <dbReference type="NCBI Taxonomy" id="10116"/>
    <lineage>
        <taxon>Eukaryota</taxon>
        <taxon>Metazoa</taxon>
        <taxon>Chordata</taxon>
        <taxon>Craniata</taxon>
        <taxon>Vertebrata</taxon>
        <taxon>Euteleostomi</taxon>
        <taxon>Mammalia</taxon>
        <taxon>Eutheria</taxon>
        <taxon>Euarchontoglires</taxon>
        <taxon>Glires</taxon>
        <taxon>Rodentia</taxon>
        <taxon>Myomorpha</taxon>
        <taxon>Muroidea</taxon>
        <taxon>Muridae</taxon>
        <taxon>Murinae</taxon>
        <taxon>Rattus</taxon>
    </lineage>
</organism>
<sequence length="189" mass="21298">MTEYKLVVVGAGGVGKSALTIQLIQNHFVDEYDPTIEDSYRKQVVIDGETCLLDILDTAGQEEYSAMRDQYMRTGEGFLCVFAINNTKSFEDIHQYREQIKRVKDSDDVPMVLVGNKCDLAARTVESRQAQDLARSYGIPYIETSAKTRQGVEDAFYTLVREIRQHKLRKLNPPDESGPGCMSCKCVLS</sequence>
<feature type="chain" id="PRO_0000326479" description="GTPase HRas">
    <location>
        <begin position="1"/>
        <end position="186"/>
    </location>
</feature>
<feature type="initiator methionine" description="Removed; alternate" evidence="2">
    <location>
        <position position="1"/>
    </location>
</feature>
<feature type="chain" id="PRO_0000043000" description="GTPase HRas, N-terminally processed">
    <location>
        <begin position="2"/>
        <end position="186"/>
    </location>
</feature>
<feature type="propeptide" id="PRO_0000043001" description="Removed in mature form" evidence="1">
    <location>
        <begin position="187"/>
        <end position="189"/>
    </location>
</feature>
<feature type="region of interest" description="Hypervariable region">
    <location>
        <begin position="166"/>
        <end position="185"/>
    </location>
</feature>
<feature type="short sequence motif" description="Effector region">
    <location>
        <begin position="32"/>
        <end position="40"/>
    </location>
</feature>
<feature type="binding site">
    <location>
        <begin position="10"/>
        <end position="17"/>
    </location>
    <ligand>
        <name>GTP</name>
        <dbReference type="ChEBI" id="CHEBI:37565"/>
    </ligand>
</feature>
<feature type="binding site">
    <location>
        <begin position="57"/>
        <end position="61"/>
    </location>
    <ligand>
        <name>GTP</name>
        <dbReference type="ChEBI" id="CHEBI:37565"/>
    </ligand>
</feature>
<feature type="binding site">
    <location>
        <begin position="116"/>
        <end position="119"/>
    </location>
    <ligand>
        <name>GTP</name>
        <dbReference type="ChEBI" id="CHEBI:37565"/>
    </ligand>
</feature>
<feature type="modified residue" description="N-acetylmethionine" evidence="2">
    <location>
        <position position="1"/>
    </location>
</feature>
<feature type="modified residue" description="N-acetylthreonine; in GTPase HRas, N-terminally processed" evidence="2">
    <location>
        <position position="2"/>
    </location>
</feature>
<feature type="modified residue" description="S-nitrosocysteine" evidence="2">
    <location>
        <position position="118"/>
    </location>
</feature>
<feature type="modified residue" description="Cysteine methyl ester" evidence="7">
    <location>
        <position position="186"/>
    </location>
</feature>
<feature type="lipid moiety-binding region" description="S-palmitoyl cysteine" evidence="2">
    <location>
        <position position="181"/>
    </location>
</feature>
<feature type="lipid moiety-binding region" description="S-(15-deoxy-Delta12,14-prostaglandin J2-9-yl)cysteine; alternate" evidence="2">
    <location>
        <position position="184"/>
    </location>
</feature>
<feature type="lipid moiety-binding region" description="S-palmitoyl cysteine; alternate" evidence="2">
    <location>
        <position position="184"/>
    </location>
</feature>
<feature type="lipid moiety-binding region" description="S-farnesyl cysteine" evidence="7">
    <location>
        <position position="186"/>
    </location>
</feature>
<feature type="cross-link" description="Glycyl lysine isopeptide (Lys-Gly) (interchain with G-Cter in ubiquitin)" evidence="2">
    <location>
        <position position="170"/>
    </location>
</feature>
<feature type="mutagenesis site" description="Interacts and partially stimulates PLCE1; when associated with L-61." evidence="4">
    <original>N</original>
    <variation>G</variation>
    <location>
        <position position="26"/>
    </location>
</feature>
<feature type="mutagenesis site" description="No interaction and stimulation of PLCE1; when associated with L-61." evidence="4">
    <original>T</original>
    <variation>S</variation>
    <location>
        <position position="35"/>
    </location>
</feature>
<feature type="mutagenesis site" description="Reduced interaction and stimulation of PLCE1; when associated with L-61." evidence="4">
    <original>E</original>
    <variation>G</variation>
    <location>
        <position position="37"/>
    </location>
</feature>
<feature type="mutagenesis site" description="Reduced interaction and stimulation of PLCE1; when associated with L-61." evidence="4">
    <original>D</original>
    <variation>N</variation>
    <location>
        <position position="38"/>
    </location>
</feature>
<feature type="mutagenesis site" description="No interaction and stimulation of PLCE1; when associated with L-61." evidence="4">
    <original>Y</original>
    <variation>C</variation>
    <location>
        <position position="40"/>
    </location>
</feature>
<feature type="mutagenesis site" description="Constitutively active. Constitutively interacts and stimulates PLCE1 phospholipase activity. Reduced interaction and stimulation of PLCE1; when associated with G-37 and N-38. No interaction and stimulation of PLCE1; when associated with S-35 and C-40. Interacts and partially stimulates PLCE1; when associated with G-26. Interacts but does not stimulate PLCE1; when associated with S-186." evidence="4">
    <original>Q</original>
    <variation>L</variation>
    <location>
        <position position="61"/>
    </location>
</feature>
<feature type="mutagenesis site" description="Interacts but does not stimulate PLCE1; when associated with L-61." evidence="4">
    <original>C</original>
    <variation>S</variation>
    <location>
        <position position="186"/>
    </location>
</feature>
<feature type="sequence conflict" description="In Ref. 1; AAA42009." evidence="8" ref="1">
    <original>P</original>
    <variation>L</variation>
    <location>
        <position position="179"/>
    </location>
</feature>
<feature type="strand" evidence="9">
    <location>
        <begin position="2"/>
        <end position="11"/>
    </location>
</feature>
<feature type="helix" evidence="9">
    <location>
        <begin position="16"/>
        <end position="25"/>
    </location>
</feature>
<feature type="strand" evidence="9">
    <location>
        <begin position="36"/>
        <end position="46"/>
    </location>
</feature>
<feature type="strand" evidence="9">
    <location>
        <begin position="49"/>
        <end position="58"/>
    </location>
</feature>
<feature type="helix" evidence="9">
    <location>
        <begin position="62"/>
        <end position="64"/>
    </location>
</feature>
<feature type="helix" evidence="9">
    <location>
        <begin position="68"/>
        <end position="72"/>
    </location>
</feature>
<feature type="strand" evidence="9">
    <location>
        <begin position="76"/>
        <end position="83"/>
    </location>
</feature>
<feature type="helix" evidence="9">
    <location>
        <begin position="87"/>
        <end position="91"/>
    </location>
</feature>
<feature type="helix" evidence="9">
    <location>
        <begin position="93"/>
        <end position="104"/>
    </location>
</feature>
<feature type="strand" evidence="9">
    <location>
        <begin position="111"/>
        <end position="116"/>
    </location>
</feature>
<feature type="helix" evidence="9">
    <location>
        <begin position="127"/>
        <end position="137"/>
    </location>
</feature>
<feature type="strand" evidence="9">
    <location>
        <begin position="141"/>
        <end position="143"/>
    </location>
</feature>
<feature type="turn" evidence="9">
    <location>
        <begin position="146"/>
        <end position="148"/>
    </location>
</feature>
<feature type="helix" evidence="9">
    <location>
        <begin position="152"/>
        <end position="163"/>
    </location>
</feature>
<evidence type="ECO:0000250" key="1"/>
<evidence type="ECO:0000250" key="2">
    <source>
        <dbReference type="UniProtKB" id="P01112"/>
    </source>
</evidence>
<evidence type="ECO:0000250" key="3">
    <source>
        <dbReference type="UniProtKB" id="Q61411"/>
    </source>
</evidence>
<evidence type="ECO:0000269" key="4">
    <source>
    </source>
</evidence>
<evidence type="ECO:0000269" key="5">
    <source>
    </source>
</evidence>
<evidence type="ECO:0000269" key="6">
    <source>
    </source>
</evidence>
<evidence type="ECO:0000269" key="7">
    <source>
    </source>
</evidence>
<evidence type="ECO:0000305" key="8"/>
<evidence type="ECO:0007829" key="9">
    <source>
        <dbReference type="PDB" id="3V4F"/>
    </source>
</evidence>
<dbReference type="EC" id="3.6.5.2" evidence="2"/>
<dbReference type="EMBL" id="M13011">
    <property type="protein sequence ID" value="AAA42009.1"/>
    <property type="molecule type" value="Genomic_DNA"/>
</dbReference>
<dbReference type="EMBL" id="BC086608">
    <property type="protein sequence ID" value="AAH86608.1"/>
    <property type="status" value="ALT_INIT"/>
    <property type="molecule type" value="mRNA"/>
</dbReference>
<dbReference type="EMBL" id="BC099130">
    <property type="protein sequence ID" value="AAH99130.1"/>
    <property type="status" value="ALT_INIT"/>
    <property type="molecule type" value="mRNA"/>
</dbReference>
<dbReference type="EMBL" id="M15188">
    <property type="protein sequence ID" value="AAA42008.1"/>
    <property type="molecule type" value="Genomic_DNA"/>
</dbReference>
<dbReference type="PIR" id="A25229">
    <property type="entry name" value="A25229"/>
</dbReference>
<dbReference type="RefSeq" id="NP_001091711.1">
    <property type="nucleotide sequence ID" value="NM_001098241.1"/>
</dbReference>
<dbReference type="RefSeq" id="NP_001123913.1">
    <property type="nucleotide sequence ID" value="NM_001130441.1"/>
</dbReference>
<dbReference type="PDB" id="3V4F">
    <property type="method" value="X-ray"/>
    <property type="resolution" value="1.39 A"/>
    <property type="chains" value="A=1-166"/>
</dbReference>
<dbReference type="PDBsum" id="3V4F"/>
<dbReference type="SMR" id="P20171"/>
<dbReference type="BioGRID" id="254357">
    <property type="interactions" value="5"/>
</dbReference>
<dbReference type="CORUM" id="P20171"/>
<dbReference type="FunCoup" id="P20171">
    <property type="interactions" value="1942"/>
</dbReference>
<dbReference type="IntAct" id="P20171">
    <property type="interactions" value="1"/>
</dbReference>
<dbReference type="MINT" id="P20171"/>
<dbReference type="STRING" id="10116.ENSRNOP00000022363"/>
<dbReference type="ChEMBL" id="CHEMBL5169120"/>
<dbReference type="iPTMnet" id="P20171"/>
<dbReference type="PhosphoSitePlus" id="P20171"/>
<dbReference type="SwissPalm" id="P20171"/>
<dbReference type="jPOST" id="P20171"/>
<dbReference type="PaxDb" id="10116-ENSRNOP00000022363"/>
<dbReference type="ABCD" id="P20171">
    <property type="antibodies" value="1 sequenced antibody"/>
</dbReference>
<dbReference type="GeneID" id="293621"/>
<dbReference type="KEGG" id="rno:293621"/>
<dbReference type="UCSC" id="RGD:2827">
    <property type="organism name" value="rat"/>
</dbReference>
<dbReference type="AGR" id="RGD:2827"/>
<dbReference type="CTD" id="3265"/>
<dbReference type="RGD" id="2827">
    <property type="gene designation" value="Hras"/>
</dbReference>
<dbReference type="VEuPathDB" id="HostDB:ENSRNOG00000016611"/>
<dbReference type="eggNOG" id="KOG0395">
    <property type="taxonomic scope" value="Eukaryota"/>
</dbReference>
<dbReference type="HOGENOM" id="CLU_041217_9_8_1"/>
<dbReference type="InParanoid" id="P20171"/>
<dbReference type="OrthoDB" id="5976022at2759"/>
<dbReference type="Reactome" id="R-RNO-1169092">
    <property type="pathway name" value="Activation of RAS in B cells"/>
</dbReference>
<dbReference type="Reactome" id="R-RNO-1250347">
    <property type="pathway name" value="SHC1 events in ERBB4 signaling"/>
</dbReference>
<dbReference type="Reactome" id="R-RNO-1433557">
    <property type="pathway name" value="Signaling by SCF-KIT"/>
</dbReference>
<dbReference type="Reactome" id="R-RNO-171007">
    <property type="pathway name" value="p38MAPK events"/>
</dbReference>
<dbReference type="Reactome" id="R-RNO-179812">
    <property type="pathway name" value="GRB2 events in EGFR signaling"/>
</dbReference>
<dbReference type="Reactome" id="R-RNO-180336">
    <property type="pathway name" value="SHC1 events in EGFR signaling"/>
</dbReference>
<dbReference type="Reactome" id="R-RNO-186763">
    <property type="pathway name" value="Downstream signal transduction"/>
</dbReference>
<dbReference type="Reactome" id="R-RNO-1963640">
    <property type="pathway name" value="GRB2 events in ERBB2 signaling"/>
</dbReference>
<dbReference type="Reactome" id="R-RNO-210993">
    <property type="pathway name" value="Tie2 Signaling"/>
</dbReference>
<dbReference type="Reactome" id="R-RNO-2179392">
    <property type="pathway name" value="EGFR Transactivation by Gastrin"/>
</dbReference>
<dbReference type="Reactome" id="R-RNO-2424491">
    <property type="pathway name" value="DAP12 signaling"/>
</dbReference>
<dbReference type="Reactome" id="R-RNO-2871796">
    <property type="pathway name" value="FCERI mediated MAPK activation"/>
</dbReference>
<dbReference type="Reactome" id="R-RNO-375165">
    <property type="pathway name" value="NCAM signaling for neurite out-growth"/>
</dbReference>
<dbReference type="Reactome" id="R-RNO-3928662">
    <property type="pathway name" value="EPHB-mediated forward signaling"/>
</dbReference>
<dbReference type="Reactome" id="R-RNO-5218921">
    <property type="pathway name" value="VEGFR2 mediated cell proliferation"/>
</dbReference>
<dbReference type="Reactome" id="R-RNO-5621575">
    <property type="pathway name" value="CD209 (DC-SIGN) signaling"/>
</dbReference>
<dbReference type="Reactome" id="R-RNO-5654688">
    <property type="pathway name" value="SHC-mediated cascade:FGFR1"/>
</dbReference>
<dbReference type="Reactome" id="R-RNO-5654693">
    <property type="pathway name" value="FRS-mediated FGFR1 signaling"/>
</dbReference>
<dbReference type="Reactome" id="R-RNO-5654699">
    <property type="pathway name" value="SHC-mediated cascade:FGFR2"/>
</dbReference>
<dbReference type="Reactome" id="R-RNO-5654700">
    <property type="pathway name" value="FRS-mediated FGFR2 signaling"/>
</dbReference>
<dbReference type="Reactome" id="R-RNO-5654704">
    <property type="pathway name" value="SHC-mediated cascade:FGFR3"/>
</dbReference>
<dbReference type="Reactome" id="R-RNO-5654706">
    <property type="pathway name" value="FRS-mediated FGFR3 signaling"/>
</dbReference>
<dbReference type="Reactome" id="R-RNO-5654712">
    <property type="pathway name" value="FRS-mediated FGFR4 signaling"/>
</dbReference>
<dbReference type="Reactome" id="R-RNO-5654719">
    <property type="pathway name" value="SHC-mediated cascade:FGFR4"/>
</dbReference>
<dbReference type="Reactome" id="R-RNO-5658442">
    <property type="pathway name" value="Regulation of RAS by GAPs"/>
</dbReference>
<dbReference type="Reactome" id="R-RNO-5673000">
    <property type="pathway name" value="RAF activation"/>
</dbReference>
<dbReference type="Reactome" id="R-RNO-5673001">
    <property type="pathway name" value="RAF/MAP kinase cascade"/>
</dbReference>
<dbReference type="Reactome" id="R-RNO-5674135">
    <property type="pathway name" value="MAP2K and MAPK activation"/>
</dbReference>
<dbReference type="Reactome" id="R-RNO-5675221">
    <property type="pathway name" value="Negative regulation of MAPK pathway"/>
</dbReference>
<dbReference type="Reactome" id="R-RNO-8849471">
    <property type="pathway name" value="PTK6 Regulates RHO GTPases, RAS GTPase and MAP kinases"/>
</dbReference>
<dbReference type="Reactome" id="R-RNO-8851805">
    <property type="pathway name" value="MET activates RAS signaling"/>
</dbReference>
<dbReference type="Reactome" id="R-RNO-9607240">
    <property type="pathway name" value="FLT3 Signaling"/>
</dbReference>
<dbReference type="Reactome" id="R-RNO-9634635">
    <property type="pathway name" value="Estrogen-stimulated signaling through PRKCZ"/>
</dbReference>
<dbReference type="Reactome" id="R-RNO-9648002">
    <property type="pathway name" value="RAS processing"/>
</dbReference>
<dbReference type="EvolutionaryTrace" id="P20171"/>
<dbReference type="PRO" id="PR:P20171"/>
<dbReference type="Proteomes" id="UP000002494">
    <property type="component" value="Chromosome 1"/>
</dbReference>
<dbReference type="Bgee" id="ENSRNOG00000016611">
    <property type="expression patterns" value="Expressed in skeletal muscle tissue and 19 other cell types or tissues"/>
</dbReference>
<dbReference type="GO" id="GO:0098978">
    <property type="term" value="C:glutamatergic synapse"/>
    <property type="evidence" value="ECO:0000266"/>
    <property type="project" value="RGD"/>
</dbReference>
<dbReference type="GO" id="GO:0005794">
    <property type="term" value="C:Golgi apparatus"/>
    <property type="evidence" value="ECO:0000250"/>
    <property type="project" value="UniProtKB"/>
</dbReference>
<dbReference type="GO" id="GO:0000139">
    <property type="term" value="C:Golgi membrane"/>
    <property type="evidence" value="ECO:0007669"/>
    <property type="project" value="UniProtKB-SubCell"/>
</dbReference>
<dbReference type="GO" id="GO:1905360">
    <property type="term" value="C:GTPase complex"/>
    <property type="evidence" value="ECO:0000266"/>
    <property type="project" value="RGD"/>
</dbReference>
<dbReference type="GO" id="GO:0005886">
    <property type="term" value="C:plasma membrane"/>
    <property type="evidence" value="ECO:0000314"/>
    <property type="project" value="UniProtKB"/>
</dbReference>
<dbReference type="GO" id="GO:0003925">
    <property type="term" value="F:G protein activity"/>
    <property type="evidence" value="ECO:0007669"/>
    <property type="project" value="UniProtKB-EC"/>
</dbReference>
<dbReference type="GO" id="GO:0019003">
    <property type="term" value="F:GDP binding"/>
    <property type="evidence" value="ECO:0000266"/>
    <property type="project" value="RGD"/>
</dbReference>
<dbReference type="GO" id="GO:0005525">
    <property type="term" value="F:GTP binding"/>
    <property type="evidence" value="ECO:0000250"/>
    <property type="project" value="UniProtKB"/>
</dbReference>
<dbReference type="GO" id="GO:0003924">
    <property type="term" value="F:GTPase activity"/>
    <property type="evidence" value="ECO:0000266"/>
    <property type="project" value="RGD"/>
</dbReference>
<dbReference type="GO" id="GO:0160185">
    <property type="term" value="F:phospholipase C activator activity"/>
    <property type="evidence" value="ECO:0000266"/>
    <property type="project" value="RGD"/>
</dbReference>
<dbReference type="GO" id="GO:0044877">
    <property type="term" value="F:protein-containing complex binding"/>
    <property type="evidence" value="ECO:0000353"/>
    <property type="project" value="RGD"/>
</dbReference>
<dbReference type="GO" id="GO:0043495">
    <property type="term" value="F:protein-membrane adaptor activity"/>
    <property type="evidence" value="ECO:0000266"/>
    <property type="project" value="RGD"/>
</dbReference>
<dbReference type="GO" id="GO:0060612">
    <property type="term" value="P:adipose tissue development"/>
    <property type="evidence" value="ECO:0000266"/>
    <property type="project" value="RGD"/>
</dbReference>
<dbReference type="GO" id="GO:0071480">
    <property type="term" value="P:cellular response to gamma radiation"/>
    <property type="evidence" value="ECO:0000266"/>
    <property type="project" value="RGD"/>
</dbReference>
<dbReference type="GO" id="GO:0090398">
    <property type="term" value="P:cellular senescence"/>
    <property type="evidence" value="ECO:0000270"/>
    <property type="project" value="RGD"/>
</dbReference>
<dbReference type="GO" id="GO:0042832">
    <property type="term" value="P:defense response to protozoan"/>
    <property type="evidence" value="ECO:0000266"/>
    <property type="project" value="RGD"/>
</dbReference>
<dbReference type="GO" id="GO:0006897">
    <property type="term" value="P:endocytosis"/>
    <property type="evidence" value="ECO:0000266"/>
    <property type="project" value="RGD"/>
</dbReference>
<dbReference type="GO" id="GO:0048144">
    <property type="term" value="P:fibroblast proliferation"/>
    <property type="evidence" value="ECO:0000266"/>
    <property type="project" value="RGD"/>
</dbReference>
<dbReference type="GO" id="GO:0008286">
    <property type="term" value="P:insulin receptor signaling pathway"/>
    <property type="evidence" value="ECO:0000266"/>
    <property type="project" value="RGD"/>
</dbReference>
<dbReference type="GO" id="GO:0097193">
    <property type="term" value="P:intrinsic apoptotic signaling pathway"/>
    <property type="evidence" value="ECO:0000266"/>
    <property type="project" value="RGD"/>
</dbReference>
<dbReference type="GO" id="GO:0001889">
    <property type="term" value="P:liver development"/>
    <property type="evidence" value="ECO:0000270"/>
    <property type="project" value="RGD"/>
</dbReference>
<dbReference type="GO" id="GO:0042552">
    <property type="term" value="P:myelination"/>
    <property type="evidence" value="ECO:0000266"/>
    <property type="project" value="RGD"/>
</dbReference>
<dbReference type="GO" id="GO:0008285">
    <property type="term" value="P:negative regulation of cell population proliferation"/>
    <property type="evidence" value="ECO:0000266"/>
    <property type="project" value="RGD"/>
</dbReference>
<dbReference type="GO" id="GO:0010629">
    <property type="term" value="P:negative regulation of gene expression"/>
    <property type="evidence" value="ECO:0000266"/>
    <property type="project" value="RGD"/>
</dbReference>
<dbReference type="GO" id="GO:0043524">
    <property type="term" value="P:negative regulation of neuron apoptotic process"/>
    <property type="evidence" value="ECO:0000266"/>
    <property type="project" value="RGD"/>
</dbReference>
<dbReference type="GO" id="GO:0051402">
    <property type="term" value="P:neuron apoptotic process"/>
    <property type="evidence" value="ECO:0000266"/>
    <property type="project" value="RGD"/>
</dbReference>
<dbReference type="GO" id="GO:0090402">
    <property type="term" value="P:oncogene-induced cell senescence"/>
    <property type="evidence" value="ECO:0000266"/>
    <property type="project" value="RGD"/>
</dbReference>
<dbReference type="GO" id="GO:0030335">
    <property type="term" value="P:positive regulation of cell migration"/>
    <property type="evidence" value="ECO:0000266"/>
    <property type="project" value="RGD"/>
</dbReference>
<dbReference type="GO" id="GO:0008284">
    <property type="term" value="P:positive regulation of cell population proliferation"/>
    <property type="evidence" value="ECO:0000266"/>
    <property type="project" value="RGD"/>
</dbReference>
<dbReference type="GO" id="GO:0045740">
    <property type="term" value="P:positive regulation of DNA replication"/>
    <property type="evidence" value="ECO:0000315"/>
    <property type="project" value="RGD"/>
</dbReference>
<dbReference type="GO" id="GO:0050679">
    <property type="term" value="P:positive regulation of epithelial cell proliferation"/>
    <property type="evidence" value="ECO:0000266"/>
    <property type="project" value="RGD"/>
</dbReference>
<dbReference type="GO" id="GO:0070374">
    <property type="term" value="P:positive regulation of ERK1 and ERK2 cascade"/>
    <property type="evidence" value="ECO:0000315"/>
    <property type="project" value="RGD"/>
</dbReference>
<dbReference type="GO" id="GO:0048146">
    <property type="term" value="P:positive regulation of fibroblast proliferation"/>
    <property type="evidence" value="ECO:0000266"/>
    <property type="project" value="RGD"/>
</dbReference>
<dbReference type="GO" id="GO:0010628">
    <property type="term" value="P:positive regulation of gene expression"/>
    <property type="evidence" value="ECO:0000266"/>
    <property type="project" value="RGD"/>
</dbReference>
<dbReference type="GO" id="GO:0046330">
    <property type="term" value="P:positive regulation of JNK cascade"/>
    <property type="evidence" value="ECO:0000266"/>
    <property type="project" value="RGD"/>
</dbReference>
<dbReference type="GO" id="GO:0043410">
    <property type="term" value="P:positive regulation of MAPK cascade"/>
    <property type="evidence" value="ECO:0000266"/>
    <property type="project" value="RGD"/>
</dbReference>
<dbReference type="GO" id="GO:2000630">
    <property type="term" value="P:positive regulation of miRNA metabolic process"/>
    <property type="evidence" value="ECO:0000266"/>
    <property type="project" value="RGD"/>
</dbReference>
<dbReference type="GO" id="GO:0090314">
    <property type="term" value="P:positive regulation of protein targeting to membrane"/>
    <property type="evidence" value="ECO:0000266"/>
    <property type="project" value="RGD"/>
</dbReference>
<dbReference type="GO" id="GO:0046579">
    <property type="term" value="P:positive regulation of Ras protein signal transduction"/>
    <property type="evidence" value="ECO:0000315"/>
    <property type="project" value="MGI"/>
</dbReference>
<dbReference type="GO" id="GO:1900029">
    <property type="term" value="P:positive regulation of ruffle assembly"/>
    <property type="evidence" value="ECO:0000266"/>
    <property type="project" value="RGD"/>
</dbReference>
<dbReference type="GO" id="GO:0045944">
    <property type="term" value="P:positive regulation of transcription by RNA polymerase II"/>
    <property type="evidence" value="ECO:0000266"/>
    <property type="project" value="RGD"/>
</dbReference>
<dbReference type="GO" id="GO:0032729">
    <property type="term" value="P:positive regulation of type II interferon production"/>
    <property type="evidence" value="ECO:0000266"/>
    <property type="project" value="RGD"/>
</dbReference>
<dbReference type="GO" id="GO:0090303">
    <property type="term" value="P:positive regulation of wound healing"/>
    <property type="evidence" value="ECO:0000266"/>
    <property type="project" value="RGD"/>
</dbReference>
<dbReference type="GO" id="GO:0007265">
    <property type="term" value="P:Ras protein signal transduction"/>
    <property type="evidence" value="ECO:0000315"/>
    <property type="project" value="RGD"/>
</dbReference>
<dbReference type="GO" id="GO:0032956">
    <property type="term" value="P:regulation of actin cytoskeleton organization"/>
    <property type="evidence" value="ECO:0000266"/>
    <property type="project" value="RGD"/>
</dbReference>
<dbReference type="GO" id="GO:0051726">
    <property type="term" value="P:regulation of cell cycle"/>
    <property type="evidence" value="ECO:0000266"/>
    <property type="project" value="RGD"/>
</dbReference>
<dbReference type="GO" id="GO:0042127">
    <property type="term" value="P:regulation of cell population proliferation"/>
    <property type="evidence" value="ECO:0000266"/>
    <property type="project" value="RGD"/>
</dbReference>
<dbReference type="GO" id="GO:0048169">
    <property type="term" value="P:regulation of long-term neuronal synaptic plasticity"/>
    <property type="evidence" value="ECO:0000266"/>
    <property type="project" value="RGD"/>
</dbReference>
<dbReference type="GO" id="GO:0098696">
    <property type="term" value="P:regulation of neurotransmitter receptor localization to postsynaptic specialization membrane"/>
    <property type="evidence" value="ECO:0000266"/>
    <property type="project" value="RGD"/>
</dbReference>
<dbReference type="GO" id="GO:0006357">
    <property type="term" value="P:regulation of transcription by RNA polymerase II"/>
    <property type="evidence" value="ECO:0000266"/>
    <property type="project" value="RGD"/>
</dbReference>
<dbReference type="GO" id="GO:0035900">
    <property type="term" value="P:response to isolation stress"/>
    <property type="evidence" value="ECO:0000270"/>
    <property type="project" value="RGD"/>
</dbReference>
<dbReference type="GO" id="GO:0014044">
    <property type="term" value="P:Schwann cell development"/>
    <property type="evidence" value="ECO:0000266"/>
    <property type="project" value="RGD"/>
</dbReference>
<dbReference type="GO" id="GO:0007264">
    <property type="term" value="P:small GTPase-mediated signal transduction"/>
    <property type="evidence" value="ECO:0000266"/>
    <property type="project" value="RGD"/>
</dbReference>
<dbReference type="GO" id="GO:0050852">
    <property type="term" value="P:T cell receptor signaling pathway"/>
    <property type="evidence" value="ECO:0000266"/>
    <property type="project" value="RGD"/>
</dbReference>
<dbReference type="GO" id="GO:0042088">
    <property type="term" value="P:T-helper 1 type immune response"/>
    <property type="evidence" value="ECO:0000266"/>
    <property type="project" value="RGD"/>
</dbReference>
<dbReference type="CDD" id="cd04138">
    <property type="entry name" value="H_N_K_Ras_like"/>
    <property type="match status" value="1"/>
</dbReference>
<dbReference type="FunFam" id="3.40.50.300:FF:000096">
    <property type="entry name" value="KRAS proto-oncogene, GTPase"/>
    <property type="match status" value="1"/>
</dbReference>
<dbReference type="Gene3D" id="3.40.50.300">
    <property type="entry name" value="P-loop containing nucleotide triphosphate hydrolases"/>
    <property type="match status" value="1"/>
</dbReference>
<dbReference type="InterPro" id="IPR027417">
    <property type="entry name" value="P-loop_NTPase"/>
</dbReference>
<dbReference type="InterPro" id="IPR005225">
    <property type="entry name" value="Small_GTP-bd"/>
</dbReference>
<dbReference type="InterPro" id="IPR001806">
    <property type="entry name" value="Small_GTPase"/>
</dbReference>
<dbReference type="InterPro" id="IPR020849">
    <property type="entry name" value="Small_GTPase_Ras-type"/>
</dbReference>
<dbReference type="NCBIfam" id="TIGR00231">
    <property type="entry name" value="small_GTP"/>
    <property type="match status" value="1"/>
</dbReference>
<dbReference type="PANTHER" id="PTHR24070">
    <property type="entry name" value="RAS, DI-RAS, AND RHEB FAMILY MEMBERS OF SMALL GTPASE SUPERFAMILY"/>
    <property type="match status" value="1"/>
</dbReference>
<dbReference type="Pfam" id="PF00071">
    <property type="entry name" value="Ras"/>
    <property type="match status" value="1"/>
</dbReference>
<dbReference type="PRINTS" id="PR00449">
    <property type="entry name" value="RASTRNSFRMNG"/>
</dbReference>
<dbReference type="SMART" id="SM00175">
    <property type="entry name" value="RAB"/>
    <property type="match status" value="1"/>
</dbReference>
<dbReference type="SMART" id="SM00173">
    <property type="entry name" value="RAS"/>
    <property type="match status" value="1"/>
</dbReference>
<dbReference type="SMART" id="SM00174">
    <property type="entry name" value="RHO"/>
    <property type="match status" value="1"/>
</dbReference>
<dbReference type="SUPFAM" id="SSF52540">
    <property type="entry name" value="P-loop containing nucleoside triphosphate hydrolases"/>
    <property type="match status" value="1"/>
</dbReference>
<dbReference type="PROSITE" id="PS51421">
    <property type="entry name" value="RAS"/>
    <property type="match status" value="1"/>
</dbReference>
<reference key="1">
    <citation type="journal article" date="1986" name="Mol. Cell. Biol.">
        <title>Nucleotide sequence of the two rat cellular rasH genes.</title>
        <authorList>
            <person name="Ruta M."/>
            <person name="Wolford R."/>
            <person name="Dhar R."/>
            <person name="Defeo-Jones D."/>
            <person name="Ellis R.W."/>
            <person name="Scolnick E.M."/>
        </authorList>
    </citation>
    <scope>NUCLEOTIDE SEQUENCE [GENOMIC DNA]</scope>
</reference>
<reference key="2">
    <citation type="journal article" date="2004" name="Genome Res.">
        <title>The status, quality, and expansion of the NIH full-length cDNA project: the Mammalian Gene Collection (MGC).</title>
        <authorList>
            <consortium name="The MGC Project Team"/>
        </authorList>
    </citation>
    <scope>NUCLEOTIDE SEQUENCE [LARGE SCALE MRNA]</scope>
    <source>
        <tissue>Brain</tissue>
        <tissue>Thymus</tissue>
    </source>
</reference>
<reference key="3">
    <citation type="journal article" date="1987" name="Proc. Natl. Acad. Sci. U.S.A.">
        <title>Nucleotide sequence and characterization of the 5' flanking region of the rat Ha-ras protooncogene.</title>
        <authorList>
            <person name="Damante G."/>
            <person name="Filetti S."/>
            <person name="Rapoport B."/>
        </authorList>
    </citation>
    <scope>NUCLEOTIDE SEQUENCE [GENOMIC DNA] OF 1-37</scope>
</reference>
<reference key="4">
    <citation type="journal article" date="1988" name="Proc. Natl. Acad. Sci. U.S.A.">
        <title>Posttranslational modification of the Ha-ras oncogene protein: evidence for a third class of protein carboxyl methyltransferases.</title>
        <authorList>
            <person name="Clarke S."/>
            <person name="Vogel J.P."/>
            <person name="Deschenes R.J."/>
            <person name="Stock J."/>
        </authorList>
    </citation>
    <scope>ISOPRENYLATION AT CYS-186</scope>
    <scope>CLEAVAGE</scope>
    <scope>METHYLATION AT CYS-186</scope>
</reference>
<reference key="5">
    <citation type="journal article" date="2001" name="EMBO J.">
        <title>Phospholipase C(epsilon): a novel Ras effector.</title>
        <authorList>
            <person name="Kelley G.G."/>
            <person name="Reks S.E."/>
            <person name="Ondrako J.M."/>
            <person name="Smrcka A.V."/>
        </authorList>
    </citation>
    <scope>INTERACTION WITH PLCE1</scope>
    <scope>MUTAGENESIS OF ASN-26; THR-35; GLU-37; ASP-38; TYR-40; GLN-61 AND CYS-186</scope>
</reference>
<reference key="6">
    <citation type="journal article" date="2009" name="PLoS ONE">
        <title>Regulator of G-protein signaling 14 (RGS14) is a selective H-Ras effector.</title>
        <authorList>
            <person name="Willard F.S."/>
            <person name="Willard M.D."/>
            <person name="Kimple A.J."/>
            <person name="Soundararajan M."/>
            <person name="Oestreich E.A."/>
            <person name="Li X."/>
            <person name="Sowa N.A."/>
            <person name="Kimple R.J."/>
            <person name="Doyle D.A."/>
            <person name="Der C.J."/>
            <person name="Zylka M.J."/>
            <person name="Snider W.D."/>
            <person name="Siderovski D.P."/>
        </authorList>
    </citation>
    <scope>IDENTIFICATION IN A COMPLEX WITH BRAF; MAP2K1; MAPK3 AND RGS14</scope>
    <scope>INTERACTION WITH RGS14</scope>
</reference>
<reference key="7">
    <citation type="journal article" date="2010" name="Cell. Signal.">
        <title>RGS14 is a multifunctional scaffold that integrates G protein and Ras/Raf MAPkinase signalling pathways.</title>
        <authorList>
            <person name="Shu F.J."/>
            <person name="Ramineni S."/>
            <person name="Hepler J.R."/>
        </authorList>
    </citation>
    <scope>INTERACTION WITH RGS14</scope>
    <scope>SUBCELLULAR LOCATION</scope>
</reference>
<keyword id="KW-0002">3D-structure</keyword>
<keyword id="KW-0007">Acetylation</keyword>
<keyword id="KW-1003">Cell membrane</keyword>
<keyword id="KW-0333">Golgi apparatus</keyword>
<keyword id="KW-0342">GTP-binding</keyword>
<keyword id="KW-0378">Hydrolase</keyword>
<keyword id="KW-1017">Isopeptide bond</keyword>
<keyword id="KW-0449">Lipoprotein</keyword>
<keyword id="KW-0472">Membrane</keyword>
<keyword id="KW-0488">Methylation</keyword>
<keyword id="KW-0547">Nucleotide-binding</keyword>
<keyword id="KW-0564">Palmitate</keyword>
<keyword id="KW-0636">Prenylation</keyword>
<keyword id="KW-0656">Proto-oncogene</keyword>
<keyword id="KW-1185">Reference proteome</keyword>
<keyword id="KW-0702">S-nitrosylation</keyword>
<keyword id="KW-0832">Ubl conjugation</keyword>
<comment type="function">
    <text>Ras proteins bind GDP/GTP and possess intrinsic GTPase activity.</text>
</comment>
<comment type="catalytic activity">
    <reaction evidence="2">
        <text>GTP + H2O = GDP + phosphate + H(+)</text>
        <dbReference type="Rhea" id="RHEA:19669"/>
        <dbReference type="ChEBI" id="CHEBI:15377"/>
        <dbReference type="ChEBI" id="CHEBI:15378"/>
        <dbReference type="ChEBI" id="CHEBI:37565"/>
        <dbReference type="ChEBI" id="CHEBI:43474"/>
        <dbReference type="ChEBI" id="CHEBI:58189"/>
        <dbReference type="EC" id="3.6.5.2"/>
    </reaction>
</comment>
<comment type="activity regulation">
    <text>Alternates between an inactive form bound to GDP and an active form bound to GTP. Activated by a guanine nucleotide-exchange factor (GEF) and inactivated by a GTPase-activating protein (GAP).</text>
</comment>
<comment type="subunit">
    <text evidence="2 3 4 5 6">In its GTP-bound form interacts with PLCE1 (PubMed:11179219). Interacts with TBC1D10C (By similarity). Interacts with RGL3 (By similarity). Interacts with HSPD1 (By similarity). Found in a complex with at least BRAF, HRAS, MAP2K1, MAPK3 and RGS14 (PubMed:19319189). Interacts (active GTP-bound form) with RGS14 (via RBD 1 domain) (PubMed:19319189, PubMed:19878719). Forms a signaling complex with RASGRP1 and DGKZ (By similarity). Interacts with RASSF5 (By similarity). Interacts with PDE6D (By similarity). Interacts with IKZF3 (By similarity). Interacts with RACK1 (By similarity). Interacts with PIK3CG; the interaction is required for membrane recruitment and beta-gamma G protein dimer-dependent activation of the PI3K gamma complex PIK3CG:PIK3R6 (By similarity). Interacts with RAPGEF2 (By similarity). Interacts (active GTP-bound form) with both SHOC2 and PP1c (all isoforms) to form a tertiary complex; SHOC2 and PP1c preferably bind M-Ras/MRAS, but they also bind K-Ras/KRAS, N-Ras/NRAS and H-Ras/HRAS (By similarity). Interacts (in GTP-bound form) with Oog1 (By similarity). Interacts (GTP-bound form) with MAPKAP1/SIN1; inhibiting H-Ras/HRAS activity (By similarity).</text>
</comment>
<comment type="subcellular location">
    <subcellularLocation>
        <location evidence="6">Cell membrane</location>
    </subcellularLocation>
    <subcellularLocation>
        <location evidence="1">Cell membrane</location>
        <topology evidence="1">Lipid-anchor</topology>
        <orientation evidence="1">Cytoplasmic side</orientation>
    </subcellularLocation>
    <subcellularLocation>
        <location evidence="1">Golgi apparatus</location>
    </subcellularLocation>
    <subcellularLocation>
        <location evidence="1">Golgi apparatus membrane</location>
        <topology evidence="1">Lipid-anchor</topology>
    </subcellularLocation>
    <text evidence="1">Shuttles between the plasma membrane and the Golgi apparatus (By similarity). The active GTP-bound form is localized most strongly to membranes than the inactive GDP-bound form.</text>
</comment>
<comment type="PTM">
    <text evidence="2">Palmitoylated by the ZDHHC9-GOLGA7 complex. A continuous cycle of de- and re-palmitoylation regulates rapid exchange between plasma membrane and Golgi.</text>
</comment>
<comment type="PTM">
    <text evidence="2">S-nitrosylated; critical for redox regulation. Important for stimulating guanine nucleotide exchange. No structural perturbation on nitrosylation.</text>
</comment>
<comment type="PTM">
    <text evidence="2">The covalent modification of cysteine by 15-deoxy-Delta12,14-prostaglandin-J2 is autocatalytic and reversible. It may occur as an alternative to other cysteine modifications, such as S-nitrosylation and S-palmitoylation.</text>
</comment>
<comment type="PTM">
    <text evidence="1">Acetylation at Lys-104 prevents interaction with guanine nucleotide exchange factors (GEFs).</text>
</comment>
<comment type="PTM">
    <text evidence="2">Ubiquitinated by the BCR(LZTR1) E3 ubiquitin ligase complex at Lys-170 in a non-degradative manner, leading to inhibit Ras signaling by decreasing Ras association with membranes.</text>
</comment>
<comment type="similarity">
    <text evidence="8">Belongs to the small GTPase superfamily. Ras family.</text>
</comment>
<comment type="sequence caution" evidence="8">
    <conflict type="erroneous initiation">
        <sequence resource="EMBL-CDS" id="AAH86608"/>
    </conflict>
    <text>Extended N-terminus.</text>
</comment>
<comment type="sequence caution" evidence="8">
    <conflict type="erroneous initiation">
        <sequence resource="EMBL-CDS" id="AAH99130"/>
    </conflict>
    <text>Extended N-terminus.</text>
</comment>